<dbReference type="EMBL" id="CP000230">
    <property type="protein sequence ID" value="ABC22043.1"/>
    <property type="molecule type" value="Genomic_DNA"/>
</dbReference>
<dbReference type="RefSeq" id="WP_011388997.1">
    <property type="nucleotide sequence ID" value="NC_007643.1"/>
</dbReference>
<dbReference type="RefSeq" id="YP_426330.1">
    <property type="nucleotide sequence ID" value="NC_007643.1"/>
</dbReference>
<dbReference type="SMR" id="Q2RV02"/>
<dbReference type="STRING" id="269796.Rru_A1242"/>
<dbReference type="EnsemblBacteria" id="ABC22043">
    <property type="protein sequence ID" value="ABC22043"/>
    <property type="gene ID" value="Rru_A1242"/>
</dbReference>
<dbReference type="KEGG" id="rru:Rru_A1242"/>
<dbReference type="PATRIC" id="fig|269796.9.peg.1307"/>
<dbReference type="eggNOG" id="COG0261">
    <property type="taxonomic scope" value="Bacteria"/>
</dbReference>
<dbReference type="HOGENOM" id="CLU_061463_3_2_5"/>
<dbReference type="PhylomeDB" id="Q2RV02"/>
<dbReference type="Proteomes" id="UP000001929">
    <property type="component" value="Chromosome"/>
</dbReference>
<dbReference type="GO" id="GO:0005737">
    <property type="term" value="C:cytoplasm"/>
    <property type="evidence" value="ECO:0007669"/>
    <property type="project" value="UniProtKB-ARBA"/>
</dbReference>
<dbReference type="GO" id="GO:1990904">
    <property type="term" value="C:ribonucleoprotein complex"/>
    <property type="evidence" value="ECO:0007669"/>
    <property type="project" value="UniProtKB-KW"/>
</dbReference>
<dbReference type="GO" id="GO:0005840">
    <property type="term" value="C:ribosome"/>
    <property type="evidence" value="ECO:0007669"/>
    <property type="project" value="UniProtKB-KW"/>
</dbReference>
<dbReference type="GO" id="GO:0019843">
    <property type="term" value="F:rRNA binding"/>
    <property type="evidence" value="ECO:0007669"/>
    <property type="project" value="UniProtKB-UniRule"/>
</dbReference>
<dbReference type="GO" id="GO:0003735">
    <property type="term" value="F:structural constituent of ribosome"/>
    <property type="evidence" value="ECO:0007669"/>
    <property type="project" value="InterPro"/>
</dbReference>
<dbReference type="GO" id="GO:0006412">
    <property type="term" value="P:translation"/>
    <property type="evidence" value="ECO:0007669"/>
    <property type="project" value="UniProtKB-UniRule"/>
</dbReference>
<dbReference type="HAMAP" id="MF_01363">
    <property type="entry name" value="Ribosomal_bL21"/>
    <property type="match status" value="1"/>
</dbReference>
<dbReference type="InterPro" id="IPR028909">
    <property type="entry name" value="bL21-like"/>
</dbReference>
<dbReference type="InterPro" id="IPR036164">
    <property type="entry name" value="bL21-like_sf"/>
</dbReference>
<dbReference type="InterPro" id="IPR001787">
    <property type="entry name" value="Ribosomal_bL21"/>
</dbReference>
<dbReference type="NCBIfam" id="TIGR00061">
    <property type="entry name" value="L21"/>
    <property type="match status" value="1"/>
</dbReference>
<dbReference type="PANTHER" id="PTHR21349">
    <property type="entry name" value="50S RIBOSOMAL PROTEIN L21"/>
    <property type="match status" value="1"/>
</dbReference>
<dbReference type="PANTHER" id="PTHR21349:SF0">
    <property type="entry name" value="LARGE RIBOSOMAL SUBUNIT PROTEIN BL21M"/>
    <property type="match status" value="1"/>
</dbReference>
<dbReference type="Pfam" id="PF00829">
    <property type="entry name" value="Ribosomal_L21p"/>
    <property type="match status" value="1"/>
</dbReference>
<dbReference type="SUPFAM" id="SSF141091">
    <property type="entry name" value="L21p-like"/>
    <property type="match status" value="1"/>
</dbReference>
<evidence type="ECO:0000255" key="1">
    <source>
        <dbReference type="HAMAP-Rule" id="MF_01363"/>
    </source>
</evidence>
<evidence type="ECO:0000305" key="2"/>
<organism>
    <name type="scientific">Rhodospirillum rubrum (strain ATCC 11170 / ATH 1.1.1 / DSM 467 / LMG 4362 / NCIMB 8255 / S1)</name>
    <dbReference type="NCBI Taxonomy" id="269796"/>
    <lineage>
        <taxon>Bacteria</taxon>
        <taxon>Pseudomonadati</taxon>
        <taxon>Pseudomonadota</taxon>
        <taxon>Alphaproteobacteria</taxon>
        <taxon>Rhodospirillales</taxon>
        <taxon>Rhodospirillaceae</taxon>
        <taxon>Rhodospirillum</taxon>
    </lineage>
</organism>
<reference key="1">
    <citation type="journal article" date="2011" name="Stand. Genomic Sci.">
        <title>Complete genome sequence of Rhodospirillum rubrum type strain (S1).</title>
        <authorList>
            <person name="Munk A.C."/>
            <person name="Copeland A."/>
            <person name="Lucas S."/>
            <person name="Lapidus A."/>
            <person name="Del Rio T.G."/>
            <person name="Barry K."/>
            <person name="Detter J.C."/>
            <person name="Hammon N."/>
            <person name="Israni S."/>
            <person name="Pitluck S."/>
            <person name="Brettin T."/>
            <person name="Bruce D."/>
            <person name="Han C."/>
            <person name="Tapia R."/>
            <person name="Gilna P."/>
            <person name="Schmutz J."/>
            <person name="Larimer F."/>
            <person name="Land M."/>
            <person name="Kyrpides N.C."/>
            <person name="Mavromatis K."/>
            <person name="Richardson P."/>
            <person name="Rohde M."/>
            <person name="Goeker M."/>
            <person name="Klenk H.P."/>
            <person name="Zhang Y."/>
            <person name="Roberts G.P."/>
            <person name="Reslewic S."/>
            <person name="Schwartz D.C."/>
        </authorList>
    </citation>
    <scope>NUCLEOTIDE SEQUENCE [LARGE SCALE GENOMIC DNA]</scope>
    <source>
        <strain>ATCC 11170 / ATH 1.1.1 / DSM 467 / LMG 4362 / NCIMB 8255 / S1</strain>
    </source>
</reference>
<feature type="chain" id="PRO_0000270727" description="Large ribosomal subunit protein bL21">
    <location>
        <begin position="1"/>
        <end position="100"/>
    </location>
</feature>
<comment type="function">
    <text evidence="1">This protein binds to 23S rRNA in the presence of protein L20.</text>
</comment>
<comment type="subunit">
    <text evidence="1">Part of the 50S ribosomal subunit. Contacts protein L20.</text>
</comment>
<comment type="similarity">
    <text evidence="1">Belongs to the bacterial ribosomal protein bL21 family.</text>
</comment>
<sequence>MFAVIKTGGKQYKVAENDVIDIEKLEADEGATVEFDSVLALGDTVGLPTIAGAKVTGEVLSQFRGEKVIIFKKHRRQNYRRKNGHRQFLTRVRITGFAGV</sequence>
<keyword id="KW-1185">Reference proteome</keyword>
<keyword id="KW-0687">Ribonucleoprotein</keyword>
<keyword id="KW-0689">Ribosomal protein</keyword>
<keyword id="KW-0694">RNA-binding</keyword>
<keyword id="KW-0699">rRNA-binding</keyword>
<accession>Q2RV02</accession>
<protein>
    <recommendedName>
        <fullName evidence="1">Large ribosomal subunit protein bL21</fullName>
    </recommendedName>
    <alternativeName>
        <fullName evidence="2">50S ribosomal protein L21</fullName>
    </alternativeName>
</protein>
<name>RL21_RHORT</name>
<gene>
    <name evidence="1" type="primary">rplU</name>
    <name type="ordered locus">Rru_A1242</name>
</gene>
<proteinExistence type="inferred from homology"/>